<sequence>MTFSPPDLSRVPGVLGRIVTEREADYRNADASLGEARAPHRRFEQALRLSPDDRGARLALIAEVKQASPSEGAIAALDPAQAARAYAEGGAAAISCLTEPRHFGGSPEALRAVVAASEVPVLRKDFVVHPAMLREAAEWGAGAALLMVSVLGERLPEFLAMTEHLGLDALVEVHDERELDIALAAGPRILGINNRDLTTLKIDLGVSPHLMARARAAGFSGVLVAESGYRAPADLREVYGLADAVLVGTSLAGSGDLAGAARALLAR</sequence>
<reference key="1">
    <citation type="journal article" date="1999" name="Science">
        <title>Genome sequence of the radioresistant bacterium Deinococcus radiodurans R1.</title>
        <authorList>
            <person name="White O."/>
            <person name="Eisen J.A."/>
            <person name="Heidelberg J.F."/>
            <person name="Hickey E.K."/>
            <person name="Peterson J.D."/>
            <person name="Dodson R.J."/>
            <person name="Haft D.H."/>
            <person name="Gwinn M.L."/>
            <person name="Nelson W.C."/>
            <person name="Richardson D.L."/>
            <person name="Moffat K.S."/>
            <person name="Qin H."/>
            <person name="Jiang L."/>
            <person name="Pamphile W."/>
            <person name="Crosby M."/>
            <person name="Shen M."/>
            <person name="Vamathevan J.J."/>
            <person name="Lam P."/>
            <person name="McDonald L.A."/>
            <person name="Utterback T.R."/>
            <person name="Zalewski C."/>
            <person name="Makarova K.S."/>
            <person name="Aravind L."/>
            <person name="Daly M.J."/>
            <person name="Minton K.W."/>
            <person name="Fleischmann R.D."/>
            <person name="Ketchum K.A."/>
            <person name="Nelson K.E."/>
            <person name="Salzberg S.L."/>
            <person name="Smith H.O."/>
            <person name="Venter J.C."/>
            <person name="Fraser C.M."/>
        </authorList>
    </citation>
    <scope>NUCLEOTIDE SEQUENCE [LARGE SCALE GENOMIC DNA]</scope>
    <source>
        <strain>ATCC 13939 / DSM 20539 / JCM 16871 / CCUG 27074 / LMG 4051 / NBRC 15346 / NCIMB 9279 / VKM B-1422 / R1</strain>
    </source>
</reference>
<proteinExistence type="inferred from homology"/>
<accession>Q9RUG0</accession>
<gene>
    <name evidence="1" type="primary">trpC</name>
    <name type="ordered locus">DR_1426</name>
</gene>
<keyword id="KW-0028">Amino-acid biosynthesis</keyword>
<keyword id="KW-0057">Aromatic amino acid biosynthesis</keyword>
<keyword id="KW-0210">Decarboxylase</keyword>
<keyword id="KW-0456">Lyase</keyword>
<keyword id="KW-1185">Reference proteome</keyword>
<keyword id="KW-0822">Tryptophan biosynthesis</keyword>
<dbReference type="EC" id="4.1.1.48" evidence="1"/>
<dbReference type="EMBL" id="AE000513">
    <property type="protein sequence ID" value="AAF10995.1"/>
    <property type="molecule type" value="Genomic_DNA"/>
</dbReference>
<dbReference type="PIR" id="H75396">
    <property type="entry name" value="H75396"/>
</dbReference>
<dbReference type="RefSeq" id="NP_295149.1">
    <property type="nucleotide sequence ID" value="NC_001263.1"/>
</dbReference>
<dbReference type="RefSeq" id="WP_010888065.1">
    <property type="nucleotide sequence ID" value="NC_001263.1"/>
</dbReference>
<dbReference type="SMR" id="Q9RUG0"/>
<dbReference type="FunCoup" id="Q9RUG0">
    <property type="interactions" value="405"/>
</dbReference>
<dbReference type="STRING" id="243230.DR_1426"/>
<dbReference type="PaxDb" id="243230-DR_1426"/>
<dbReference type="EnsemblBacteria" id="AAF10995">
    <property type="protein sequence ID" value="AAF10995"/>
    <property type="gene ID" value="DR_1426"/>
</dbReference>
<dbReference type="GeneID" id="69517667"/>
<dbReference type="KEGG" id="dra:DR_1426"/>
<dbReference type="PATRIC" id="fig|243230.17.peg.1622"/>
<dbReference type="eggNOG" id="COG0134">
    <property type="taxonomic scope" value="Bacteria"/>
</dbReference>
<dbReference type="HOGENOM" id="CLU_034247_0_1_0"/>
<dbReference type="InParanoid" id="Q9RUG0"/>
<dbReference type="OrthoDB" id="9804217at2"/>
<dbReference type="UniPathway" id="UPA00035">
    <property type="reaction ID" value="UER00043"/>
</dbReference>
<dbReference type="Proteomes" id="UP000002524">
    <property type="component" value="Chromosome 1"/>
</dbReference>
<dbReference type="GO" id="GO:0004425">
    <property type="term" value="F:indole-3-glycerol-phosphate synthase activity"/>
    <property type="evidence" value="ECO:0000318"/>
    <property type="project" value="GO_Central"/>
</dbReference>
<dbReference type="GO" id="GO:0004640">
    <property type="term" value="F:phosphoribosylanthranilate isomerase activity"/>
    <property type="evidence" value="ECO:0000318"/>
    <property type="project" value="GO_Central"/>
</dbReference>
<dbReference type="GO" id="GO:0000162">
    <property type="term" value="P:L-tryptophan biosynthetic process"/>
    <property type="evidence" value="ECO:0000318"/>
    <property type="project" value="GO_Central"/>
</dbReference>
<dbReference type="CDD" id="cd00331">
    <property type="entry name" value="IGPS"/>
    <property type="match status" value="1"/>
</dbReference>
<dbReference type="Gene3D" id="3.20.20.70">
    <property type="entry name" value="Aldolase class I"/>
    <property type="match status" value="1"/>
</dbReference>
<dbReference type="HAMAP" id="MF_00134_B">
    <property type="entry name" value="IGPS_B"/>
    <property type="match status" value="1"/>
</dbReference>
<dbReference type="InterPro" id="IPR013785">
    <property type="entry name" value="Aldolase_TIM"/>
</dbReference>
<dbReference type="InterPro" id="IPR045186">
    <property type="entry name" value="Indole-3-glycerol_P_synth"/>
</dbReference>
<dbReference type="InterPro" id="IPR013798">
    <property type="entry name" value="Indole-3-glycerol_P_synth_dom"/>
</dbReference>
<dbReference type="InterPro" id="IPR001468">
    <property type="entry name" value="Indole-3-GlycerolPSynthase_CS"/>
</dbReference>
<dbReference type="InterPro" id="IPR011060">
    <property type="entry name" value="RibuloseP-bd_barrel"/>
</dbReference>
<dbReference type="NCBIfam" id="NF001376">
    <property type="entry name" value="PRK00278.2-3"/>
    <property type="match status" value="1"/>
</dbReference>
<dbReference type="PANTHER" id="PTHR22854:SF2">
    <property type="entry name" value="INDOLE-3-GLYCEROL-PHOSPHATE SYNTHASE"/>
    <property type="match status" value="1"/>
</dbReference>
<dbReference type="PANTHER" id="PTHR22854">
    <property type="entry name" value="TRYPTOPHAN BIOSYNTHESIS PROTEIN"/>
    <property type="match status" value="1"/>
</dbReference>
<dbReference type="Pfam" id="PF00218">
    <property type="entry name" value="IGPS"/>
    <property type="match status" value="1"/>
</dbReference>
<dbReference type="SUPFAM" id="SSF51366">
    <property type="entry name" value="Ribulose-phoshate binding barrel"/>
    <property type="match status" value="1"/>
</dbReference>
<dbReference type="PROSITE" id="PS00614">
    <property type="entry name" value="IGPS"/>
    <property type="match status" value="1"/>
</dbReference>
<comment type="catalytic activity">
    <reaction evidence="1">
        <text>1-(2-carboxyphenylamino)-1-deoxy-D-ribulose 5-phosphate + H(+) = (1S,2R)-1-C-(indol-3-yl)glycerol 3-phosphate + CO2 + H2O</text>
        <dbReference type="Rhea" id="RHEA:23476"/>
        <dbReference type="ChEBI" id="CHEBI:15377"/>
        <dbReference type="ChEBI" id="CHEBI:15378"/>
        <dbReference type="ChEBI" id="CHEBI:16526"/>
        <dbReference type="ChEBI" id="CHEBI:58613"/>
        <dbReference type="ChEBI" id="CHEBI:58866"/>
        <dbReference type="EC" id="4.1.1.48"/>
    </reaction>
</comment>
<comment type="pathway">
    <text evidence="1">Amino-acid biosynthesis; L-tryptophan biosynthesis; L-tryptophan from chorismate: step 4/5.</text>
</comment>
<comment type="similarity">
    <text evidence="1">Belongs to the TrpC family.</text>
</comment>
<protein>
    <recommendedName>
        <fullName evidence="1">Indole-3-glycerol phosphate synthase</fullName>
        <shortName evidence="1">IGPS</shortName>
        <ecNumber evidence="1">4.1.1.48</ecNumber>
    </recommendedName>
</protein>
<feature type="chain" id="PRO_0000154223" description="Indole-3-glycerol phosphate synthase">
    <location>
        <begin position="1"/>
        <end position="267"/>
    </location>
</feature>
<name>TRPC_DEIRA</name>
<evidence type="ECO:0000255" key="1">
    <source>
        <dbReference type="HAMAP-Rule" id="MF_00134"/>
    </source>
</evidence>
<organism>
    <name type="scientific">Deinococcus radiodurans (strain ATCC 13939 / DSM 20539 / JCM 16871 / CCUG 27074 / LMG 4051 / NBRC 15346 / NCIMB 9279 / VKM B-1422 / R1)</name>
    <dbReference type="NCBI Taxonomy" id="243230"/>
    <lineage>
        <taxon>Bacteria</taxon>
        <taxon>Thermotogati</taxon>
        <taxon>Deinococcota</taxon>
        <taxon>Deinococci</taxon>
        <taxon>Deinococcales</taxon>
        <taxon>Deinococcaceae</taxon>
        <taxon>Deinococcus</taxon>
    </lineage>
</organism>